<gene>
    <name type="ordered locus">Os03g0210000</name>
    <name type="ordered locus">LOC_Os03g11160</name>
    <name evidence="4" type="ORF">OsJ_09870</name>
</gene>
<organism>
    <name type="scientific">Oryza sativa subsp. japonica</name>
    <name type="common">Rice</name>
    <dbReference type="NCBI Taxonomy" id="39947"/>
    <lineage>
        <taxon>Eukaryota</taxon>
        <taxon>Viridiplantae</taxon>
        <taxon>Streptophyta</taxon>
        <taxon>Embryophyta</taxon>
        <taxon>Tracheophyta</taxon>
        <taxon>Spermatophyta</taxon>
        <taxon>Magnoliopsida</taxon>
        <taxon>Liliopsida</taxon>
        <taxon>Poales</taxon>
        <taxon>Poaceae</taxon>
        <taxon>BOP clade</taxon>
        <taxon>Oryzoideae</taxon>
        <taxon>Oryzeae</taxon>
        <taxon>Oryzinae</taxon>
        <taxon>Oryza</taxon>
        <taxon>Oryza sativa</taxon>
    </lineage>
</organism>
<sequence>MRTSSLVLFAAVAVFGAACTAAAGDESWKTIDANDRHVQDVALWAVAETDWASATGGLTLNTVDGAEKRFEAGVNYYRLTLEASSRVVAKYLRFQAVVYEEGDEHKLVSFVPIH</sequence>
<name>CYT9_ORYSJ</name>
<evidence type="ECO:0000250" key="1"/>
<evidence type="ECO:0000255" key="2"/>
<evidence type="ECO:0000305" key="3"/>
<evidence type="ECO:0000312" key="4">
    <source>
        <dbReference type="EMBL" id="EAZ26017.1"/>
    </source>
</evidence>
<dbReference type="EMBL" id="DP000009">
    <property type="protein sequence ID" value="ABF94586.1"/>
    <property type="molecule type" value="Genomic_DNA"/>
</dbReference>
<dbReference type="EMBL" id="AP008209">
    <property type="status" value="NOT_ANNOTATED_CDS"/>
    <property type="molecule type" value="Genomic_DNA"/>
</dbReference>
<dbReference type="EMBL" id="AP014959">
    <property type="protein sequence ID" value="BAS82901.1"/>
    <property type="molecule type" value="Genomic_DNA"/>
</dbReference>
<dbReference type="EMBL" id="CM000140">
    <property type="protein sequence ID" value="EAZ26017.1"/>
    <property type="molecule type" value="Genomic_DNA"/>
</dbReference>
<dbReference type="SMR" id="Q10Q48"/>
<dbReference type="STRING" id="39947.Q10Q48"/>
<dbReference type="PaxDb" id="39947-Q10Q48"/>
<dbReference type="EnsemblPlants" id="Os03t0210000-00">
    <property type="protein sequence ID" value="Os03t0210000-00"/>
    <property type="gene ID" value="Os03g0210000"/>
</dbReference>
<dbReference type="GeneID" id="107275461"/>
<dbReference type="Gramene" id="Os03t0210000-00">
    <property type="protein sequence ID" value="Os03t0210000-00"/>
    <property type="gene ID" value="Os03g0210000"/>
</dbReference>
<dbReference type="KEGG" id="osa:107275461"/>
<dbReference type="HOGENOM" id="CLU_113093_2_1_1"/>
<dbReference type="InParanoid" id="Q10Q48"/>
<dbReference type="OMA" id="ANDQHVQ"/>
<dbReference type="OrthoDB" id="10331467at2759"/>
<dbReference type="Proteomes" id="UP000000763">
    <property type="component" value="Chromosome 3"/>
</dbReference>
<dbReference type="Proteomes" id="UP000007752">
    <property type="component" value="Chromosome 3"/>
</dbReference>
<dbReference type="Proteomes" id="UP000059680">
    <property type="component" value="Chromosome 3"/>
</dbReference>
<dbReference type="GO" id="GO:0005576">
    <property type="term" value="C:extracellular region"/>
    <property type="evidence" value="ECO:0007669"/>
    <property type="project" value="UniProtKB-SubCell"/>
</dbReference>
<dbReference type="GO" id="GO:0004869">
    <property type="term" value="F:cysteine-type endopeptidase inhibitor activity"/>
    <property type="evidence" value="ECO:0007669"/>
    <property type="project" value="UniProtKB-KW"/>
</dbReference>
<dbReference type="GO" id="GO:0006952">
    <property type="term" value="P:defense response"/>
    <property type="evidence" value="ECO:0007669"/>
    <property type="project" value="UniProtKB-KW"/>
</dbReference>
<dbReference type="Gene3D" id="3.10.450.10">
    <property type="match status" value="1"/>
</dbReference>
<dbReference type="InterPro" id="IPR027214">
    <property type="entry name" value="Cystatin"/>
</dbReference>
<dbReference type="InterPro" id="IPR000010">
    <property type="entry name" value="Cystatin_dom"/>
</dbReference>
<dbReference type="InterPro" id="IPR046350">
    <property type="entry name" value="Cystatin_sf"/>
</dbReference>
<dbReference type="PANTHER" id="PTHR47116">
    <property type="entry name" value="PHLOEM FILAMENT PROTEIN"/>
    <property type="match status" value="1"/>
</dbReference>
<dbReference type="Pfam" id="PF16845">
    <property type="entry name" value="SQAPI"/>
    <property type="match status" value="1"/>
</dbReference>
<dbReference type="SUPFAM" id="SSF54403">
    <property type="entry name" value="Cystatin/monellin"/>
    <property type="match status" value="1"/>
</dbReference>
<proteinExistence type="inferred from homology"/>
<reference key="1">
    <citation type="journal article" date="2005" name="Genome Res.">
        <title>Sequence, annotation, and analysis of synteny between rice chromosome 3 and diverged grass species.</title>
        <authorList>
            <consortium name="The rice chromosome 3 sequencing consortium"/>
            <person name="Buell C.R."/>
            <person name="Yuan Q."/>
            <person name="Ouyang S."/>
            <person name="Liu J."/>
            <person name="Zhu W."/>
            <person name="Wang A."/>
            <person name="Maiti R."/>
            <person name="Haas B."/>
            <person name="Wortman J."/>
            <person name="Pertea M."/>
            <person name="Jones K.M."/>
            <person name="Kim M."/>
            <person name="Overton L."/>
            <person name="Tsitrin T."/>
            <person name="Fadrosh D."/>
            <person name="Bera J."/>
            <person name="Weaver B."/>
            <person name="Jin S."/>
            <person name="Johri S."/>
            <person name="Reardon M."/>
            <person name="Webb K."/>
            <person name="Hill J."/>
            <person name="Moffat K."/>
            <person name="Tallon L."/>
            <person name="Van Aken S."/>
            <person name="Lewis M."/>
            <person name="Utterback T."/>
            <person name="Feldblyum T."/>
            <person name="Zismann V."/>
            <person name="Iobst S."/>
            <person name="Hsiao J."/>
            <person name="de Vazeille A.R."/>
            <person name="Salzberg S.L."/>
            <person name="White O."/>
            <person name="Fraser C.M."/>
            <person name="Yu Y."/>
            <person name="Kim H."/>
            <person name="Rambo T."/>
            <person name="Currie J."/>
            <person name="Collura K."/>
            <person name="Kernodle-Thompson S."/>
            <person name="Wei F."/>
            <person name="Kudrna K."/>
            <person name="Ammiraju J.S.S."/>
            <person name="Luo M."/>
            <person name="Goicoechea J.L."/>
            <person name="Wing R.A."/>
            <person name="Henry D."/>
            <person name="Oates R."/>
            <person name="Palmer M."/>
            <person name="Pries G."/>
            <person name="Saski C."/>
            <person name="Simmons J."/>
            <person name="Soderlund C."/>
            <person name="Nelson W."/>
            <person name="de la Bastide M."/>
            <person name="Spiegel L."/>
            <person name="Nascimento L."/>
            <person name="Huang E."/>
            <person name="Preston R."/>
            <person name="Zutavern T."/>
            <person name="Palmer L."/>
            <person name="O'Shaughnessy A."/>
            <person name="Dike S."/>
            <person name="McCombie W.R."/>
            <person name="Minx P."/>
            <person name="Cordum H."/>
            <person name="Wilson R."/>
            <person name="Jin W."/>
            <person name="Lee H.R."/>
            <person name="Jiang J."/>
            <person name="Jackson S."/>
        </authorList>
    </citation>
    <scope>NUCLEOTIDE SEQUENCE [LARGE SCALE GENOMIC DNA]</scope>
    <source>
        <strain>cv. Nipponbare</strain>
    </source>
</reference>
<reference key="2">
    <citation type="journal article" date="2005" name="Nature">
        <title>The map-based sequence of the rice genome.</title>
        <authorList>
            <consortium name="International rice genome sequencing project (IRGSP)"/>
        </authorList>
    </citation>
    <scope>NUCLEOTIDE SEQUENCE [LARGE SCALE GENOMIC DNA]</scope>
    <source>
        <strain>cv. Nipponbare</strain>
    </source>
</reference>
<reference key="3">
    <citation type="journal article" date="2008" name="Nucleic Acids Res.">
        <title>The rice annotation project database (RAP-DB): 2008 update.</title>
        <authorList>
            <consortium name="The rice annotation project (RAP)"/>
        </authorList>
    </citation>
    <scope>GENOME REANNOTATION</scope>
    <source>
        <strain>cv. Nipponbare</strain>
    </source>
</reference>
<reference key="4">
    <citation type="journal article" date="2013" name="Rice">
        <title>Improvement of the Oryza sativa Nipponbare reference genome using next generation sequence and optical map data.</title>
        <authorList>
            <person name="Kawahara Y."/>
            <person name="de la Bastide M."/>
            <person name="Hamilton J.P."/>
            <person name="Kanamori H."/>
            <person name="McCombie W.R."/>
            <person name="Ouyang S."/>
            <person name="Schwartz D.C."/>
            <person name="Tanaka T."/>
            <person name="Wu J."/>
            <person name="Zhou S."/>
            <person name="Childs K.L."/>
            <person name="Davidson R.M."/>
            <person name="Lin H."/>
            <person name="Quesada-Ocampo L."/>
            <person name="Vaillancourt B."/>
            <person name="Sakai H."/>
            <person name="Lee S.S."/>
            <person name="Kim J."/>
            <person name="Numa H."/>
            <person name="Itoh T."/>
            <person name="Buell C.R."/>
            <person name="Matsumoto T."/>
        </authorList>
    </citation>
    <scope>GENOME REANNOTATION</scope>
    <source>
        <strain>cv. Nipponbare</strain>
    </source>
</reference>
<reference key="5">
    <citation type="journal article" date="2005" name="PLoS Biol.">
        <title>The genomes of Oryza sativa: a history of duplications.</title>
        <authorList>
            <person name="Yu J."/>
            <person name="Wang J."/>
            <person name="Lin W."/>
            <person name="Li S."/>
            <person name="Li H."/>
            <person name="Zhou J."/>
            <person name="Ni P."/>
            <person name="Dong W."/>
            <person name="Hu S."/>
            <person name="Zeng C."/>
            <person name="Zhang J."/>
            <person name="Zhang Y."/>
            <person name="Li R."/>
            <person name="Xu Z."/>
            <person name="Li S."/>
            <person name="Li X."/>
            <person name="Zheng H."/>
            <person name="Cong L."/>
            <person name="Lin L."/>
            <person name="Yin J."/>
            <person name="Geng J."/>
            <person name="Li G."/>
            <person name="Shi J."/>
            <person name="Liu J."/>
            <person name="Lv H."/>
            <person name="Li J."/>
            <person name="Wang J."/>
            <person name="Deng Y."/>
            <person name="Ran L."/>
            <person name="Shi X."/>
            <person name="Wang X."/>
            <person name="Wu Q."/>
            <person name="Li C."/>
            <person name="Ren X."/>
            <person name="Wang J."/>
            <person name="Wang X."/>
            <person name="Li D."/>
            <person name="Liu D."/>
            <person name="Zhang X."/>
            <person name="Ji Z."/>
            <person name="Zhao W."/>
            <person name="Sun Y."/>
            <person name="Zhang Z."/>
            <person name="Bao J."/>
            <person name="Han Y."/>
            <person name="Dong L."/>
            <person name="Ji J."/>
            <person name="Chen P."/>
            <person name="Wu S."/>
            <person name="Liu J."/>
            <person name="Xiao Y."/>
            <person name="Bu D."/>
            <person name="Tan J."/>
            <person name="Yang L."/>
            <person name="Ye C."/>
            <person name="Zhang J."/>
            <person name="Xu J."/>
            <person name="Zhou Y."/>
            <person name="Yu Y."/>
            <person name="Zhang B."/>
            <person name="Zhuang S."/>
            <person name="Wei H."/>
            <person name="Liu B."/>
            <person name="Lei M."/>
            <person name="Yu H."/>
            <person name="Li Y."/>
            <person name="Xu H."/>
            <person name="Wei S."/>
            <person name="He X."/>
            <person name="Fang L."/>
            <person name="Zhang Z."/>
            <person name="Zhang Y."/>
            <person name="Huang X."/>
            <person name="Su Z."/>
            <person name="Tong W."/>
            <person name="Li J."/>
            <person name="Tong Z."/>
            <person name="Li S."/>
            <person name="Ye J."/>
            <person name="Wang L."/>
            <person name="Fang L."/>
            <person name="Lei T."/>
            <person name="Chen C.-S."/>
            <person name="Chen H.-C."/>
            <person name="Xu Z."/>
            <person name="Li H."/>
            <person name="Huang H."/>
            <person name="Zhang F."/>
            <person name="Xu H."/>
            <person name="Li N."/>
            <person name="Zhao C."/>
            <person name="Li S."/>
            <person name="Dong L."/>
            <person name="Huang Y."/>
            <person name="Li L."/>
            <person name="Xi Y."/>
            <person name="Qi Q."/>
            <person name="Li W."/>
            <person name="Zhang B."/>
            <person name="Hu W."/>
            <person name="Zhang Y."/>
            <person name="Tian X."/>
            <person name="Jiao Y."/>
            <person name="Liang X."/>
            <person name="Jin J."/>
            <person name="Gao L."/>
            <person name="Zheng W."/>
            <person name="Hao B."/>
            <person name="Liu S.-M."/>
            <person name="Wang W."/>
            <person name="Yuan L."/>
            <person name="Cao M."/>
            <person name="McDermott J."/>
            <person name="Samudrala R."/>
            <person name="Wang J."/>
            <person name="Wong G.K.-S."/>
            <person name="Yang H."/>
        </authorList>
    </citation>
    <scope>NUCLEOTIDE SEQUENCE [LARGE SCALE GENOMIC DNA]</scope>
    <source>
        <strain>cv. Nipponbare</strain>
    </source>
</reference>
<reference key="6">
    <citation type="journal article" date="2005" name="Mol. Genet. Genomics">
        <title>Comparative phylogenetic analysis of cystatin gene families from arabidopsis, rice and barley.</title>
        <authorList>
            <person name="Martinez M."/>
            <person name="Abraham Z."/>
            <person name="Carbonero P."/>
            <person name="Diaz I."/>
        </authorList>
    </citation>
    <scope>GENE FAMILY</scope>
</reference>
<accession>Q10Q48</accession>
<accession>A3AFC8</accession>
<protein>
    <recommendedName>
        <fullName>Putative cysteine proteinase inhibitor 9</fullName>
    </recommendedName>
    <alternativeName>
        <fullName>Oryzacystatin IX</fullName>
        <shortName>OC-IX</shortName>
    </alternativeName>
    <alternativeName>
        <fullName>Oryzacystatin-9</fullName>
    </alternativeName>
</protein>
<feature type="signal peptide" evidence="2">
    <location>
        <begin position="1"/>
        <end position="23"/>
    </location>
</feature>
<feature type="chain" id="PRO_0000277506" description="Putative cysteine proteinase inhibitor 9">
    <location>
        <begin position="24"/>
        <end position="114"/>
    </location>
</feature>
<comment type="function">
    <text evidence="1">Specific inhibitor of cysteine proteinases. Probably involved in the regulation of endogenous processes and in defense against pests and pathogens (By similarity).</text>
</comment>
<comment type="subcellular location">
    <subcellularLocation>
        <location evidence="3">Secreted</location>
    </subcellularLocation>
</comment>
<comment type="similarity">
    <text evidence="3">Belongs to the cystatin family. Phytocystatin subfamily.</text>
</comment>
<keyword id="KW-0611">Plant defense</keyword>
<keyword id="KW-0646">Protease inhibitor</keyword>
<keyword id="KW-1185">Reference proteome</keyword>
<keyword id="KW-0964">Secreted</keyword>
<keyword id="KW-0732">Signal</keyword>
<keyword id="KW-0789">Thiol protease inhibitor</keyword>